<keyword id="KW-0648">Protein biosynthesis</keyword>
<keyword id="KW-0808">Transferase</keyword>
<reference key="1">
    <citation type="journal article" date="2004" name="Proc. Natl. Acad. Sci. U.S.A.">
        <title>Complete genomes of two clinical Staphylococcus aureus strains: evidence for the rapid evolution of virulence and drug resistance.</title>
        <authorList>
            <person name="Holden M.T.G."/>
            <person name="Feil E.J."/>
            <person name="Lindsay J.A."/>
            <person name="Peacock S.J."/>
            <person name="Day N.P.J."/>
            <person name="Enright M.C."/>
            <person name="Foster T.J."/>
            <person name="Moore C.E."/>
            <person name="Hurst L."/>
            <person name="Atkin R."/>
            <person name="Barron A."/>
            <person name="Bason N."/>
            <person name="Bentley S.D."/>
            <person name="Chillingworth C."/>
            <person name="Chillingworth T."/>
            <person name="Churcher C."/>
            <person name="Clark L."/>
            <person name="Corton C."/>
            <person name="Cronin A."/>
            <person name="Doggett J."/>
            <person name="Dowd L."/>
            <person name="Feltwell T."/>
            <person name="Hance Z."/>
            <person name="Harris B."/>
            <person name="Hauser H."/>
            <person name="Holroyd S."/>
            <person name="Jagels K."/>
            <person name="James K.D."/>
            <person name="Lennard N."/>
            <person name="Line A."/>
            <person name="Mayes R."/>
            <person name="Moule S."/>
            <person name="Mungall K."/>
            <person name="Ormond D."/>
            <person name="Quail M.A."/>
            <person name="Rabbinowitsch E."/>
            <person name="Rutherford K.M."/>
            <person name="Sanders M."/>
            <person name="Sharp S."/>
            <person name="Simmonds M."/>
            <person name="Stevens K."/>
            <person name="Whitehead S."/>
            <person name="Barrell B.G."/>
            <person name="Spratt B.G."/>
            <person name="Parkhill J."/>
        </authorList>
    </citation>
    <scope>NUCLEOTIDE SEQUENCE [LARGE SCALE GENOMIC DNA]</scope>
    <source>
        <strain>MRSA252</strain>
    </source>
</reference>
<accession>Q6GHL9</accession>
<proteinExistence type="inferred from homology"/>
<sequence length="311" mass="34226">MTKIIFMGTPDFSTTVLEMLIAEHDVIAVVTQPDRPVGRKRVMTPPPVKKVAMKYDLPVYQPEKLSGSEELEQLLQLDVDLIVTAAFGQLLPESLLALPKLGAINVHASLLPKYRGGAPIHQAIIDGEQETGITIMYMVKKLDAGNIISQQAIKIEENDNVGTMHDKLSVLGADLLKETLPSIIEGTNESVPQDDTQATFASNIRREDERISWNKPGRQVFNQIRGLSPWPVAYTTMDDTNLKIYDAELVETNKINEPGTIIETTKKAIIVATNDNEAVAIKDMQLAGKKRMLAANYLSGAQNTLVGKKLI</sequence>
<protein>
    <recommendedName>
        <fullName evidence="1">Methionyl-tRNA formyltransferase</fullName>
        <ecNumber evidence="1">2.1.2.9</ecNumber>
    </recommendedName>
</protein>
<feature type="chain" id="PRO_0000083048" description="Methionyl-tRNA formyltransferase">
    <location>
        <begin position="1"/>
        <end position="311"/>
    </location>
</feature>
<feature type="binding site" evidence="1">
    <location>
        <begin position="109"/>
        <end position="112"/>
    </location>
    <ligand>
        <name>(6S)-5,6,7,8-tetrahydrofolate</name>
        <dbReference type="ChEBI" id="CHEBI:57453"/>
    </ligand>
</feature>
<gene>
    <name evidence="1" type="primary">fmt</name>
    <name type="ordered locus">SAR1192</name>
</gene>
<organism>
    <name type="scientific">Staphylococcus aureus (strain MRSA252)</name>
    <dbReference type="NCBI Taxonomy" id="282458"/>
    <lineage>
        <taxon>Bacteria</taxon>
        <taxon>Bacillati</taxon>
        <taxon>Bacillota</taxon>
        <taxon>Bacilli</taxon>
        <taxon>Bacillales</taxon>
        <taxon>Staphylococcaceae</taxon>
        <taxon>Staphylococcus</taxon>
    </lineage>
</organism>
<evidence type="ECO:0000255" key="1">
    <source>
        <dbReference type="HAMAP-Rule" id="MF_00182"/>
    </source>
</evidence>
<name>FMT_STAAR</name>
<dbReference type="EC" id="2.1.2.9" evidence="1"/>
<dbReference type="EMBL" id="BX571856">
    <property type="protein sequence ID" value="CAG40194.1"/>
    <property type="molecule type" value="Genomic_DNA"/>
</dbReference>
<dbReference type="RefSeq" id="WP_000161291.1">
    <property type="nucleotide sequence ID" value="NC_002952.2"/>
</dbReference>
<dbReference type="SMR" id="Q6GHL9"/>
<dbReference type="KEGG" id="sar:SAR1192"/>
<dbReference type="HOGENOM" id="CLU_033347_1_1_9"/>
<dbReference type="Proteomes" id="UP000000596">
    <property type="component" value="Chromosome"/>
</dbReference>
<dbReference type="GO" id="GO:0005829">
    <property type="term" value="C:cytosol"/>
    <property type="evidence" value="ECO:0007669"/>
    <property type="project" value="TreeGrafter"/>
</dbReference>
<dbReference type="GO" id="GO:0004479">
    <property type="term" value="F:methionyl-tRNA formyltransferase activity"/>
    <property type="evidence" value="ECO:0007669"/>
    <property type="project" value="UniProtKB-UniRule"/>
</dbReference>
<dbReference type="CDD" id="cd08646">
    <property type="entry name" value="FMT_core_Met-tRNA-FMT_N"/>
    <property type="match status" value="1"/>
</dbReference>
<dbReference type="CDD" id="cd08704">
    <property type="entry name" value="Met_tRNA_FMT_C"/>
    <property type="match status" value="1"/>
</dbReference>
<dbReference type="FunFam" id="3.40.50.12230:FF:000001">
    <property type="entry name" value="Methionyl-tRNA formyltransferase"/>
    <property type="match status" value="1"/>
</dbReference>
<dbReference type="FunFam" id="3.40.50.170:FF:000004">
    <property type="entry name" value="Methionyl-tRNA formyltransferase"/>
    <property type="match status" value="1"/>
</dbReference>
<dbReference type="Gene3D" id="3.10.25.10">
    <property type="entry name" value="Formyl transferase, C-terminal domain"/>
    <property type="match status" value="1"/>
</dbReference>
<dbReference type="Gene3D" id="3.40.50.170">
    <property type="entry name" value="Formyl transferase, N-terminal domain"/>
    <property type="match status" value="1"/>
</dbReference>
<dbReference type="HAMAP" id="MF_00182">
    <property type="entry name" value="Formyl_trans"/>
    <property type="match status" value="1"/>
</dbReference>
<dbReference type="InterPro" id="IPR005794">
    <property type="entry name" value="Fmt"/>
</dbReference>
<dbReference type="InterPro" id="IPR005793">
    <property type="entry name" value="Formyl_trans_C"/>
</dbReference>
<dbReference type="InterPro" id="IPR037022">
    <property type="entry name" value="Formyl_trans_C_sf"/>
</dbReference>
<dbReference type="InterPro" id="IPR002376">
    <property type="entry name" value="Formyl_transf_N"/>
</dbReference>
<dbReference type="InterPro" id="IPR036477">
    <property type="entry name" value="Formyl_transf_N_sf"/>
</dbReference>
<dbReference type="InterPro" id="IPR011034">
    <property type="entry name" value="Formyl_transferase-like_C_sf"/>
</dbReference>
<dbReference type="InterPro" id="IPR001555">
    <property type="entry name" value="GART_AS"/>
</dbReference>
<dbReference type="InterPro" id="IPR044135">
    <property type="entry name" value="Met-tRNA-FMT_C"/>
</dbReference>
<dbReference type="InterPro" id="IPR041711">
    <property type="entry name" value="Met-tRNA-FMT_N"/>
</dbReference>
<dbReference type="NCBIfam" id="TIGR00460">
    <property type="entry name" value="fmt"/>
    <property type="match status" value="1"/>
</dbReference>
<dbReference type="PANTHER" id="PTHR11138">
    <property type="entry name" value="METHIONYL-TRNA FORMYLTRANSFERASE"/>
    <property type="match status" value="1"/>
</dbReference>
<dbReference type="PANTHER" id="PTHR11138:SF5">
    <property type="entry name" value="METHIONYL-TRNA FORMYLTRANSFERASE, MITOCHONDRIAL"/>
    <property type="match status" value="1"/>
</dbReference>
<dbReference type="Pfam" id="PF02911">
    <property type="entry name" value="Formyl_trans_C"/>
    <property type="match status" value="1"/>
</dbReference>
<dbReference type="Pfam" id="PF00551">
    <property type="entry name" value="Formyl_trans_N"/>
    <property type="match status" value="1"/>
</dbReference>
<dbReference type="SUPFAM" id="SSF50486">
    <property type="entry name" value="FMT C-terminal domain-like"/>
    <property type="match status" value="1"/>
</dbReference>
<dbReference type="SUPFAM" id="SSF53328">
    <property type="entry name" value="Formyltransferase"/>
    <property type="match status" value="1"/>
</dbReference>
<dbReference type="PROSITE" id="PS00373">
    <property type="entry name" value="GART"/>
    <property type="match status" value="1"/>
</dbReference>
<comment type="function">
    <text evidence="1">Attaches a formyl group to the free amino group of methionyl-tRNA(fMet). The formyl group appears to play a dual role in the initiator identity of N-formylmethionyl-tRNA by promoting its recognition by IF2 and preventing the misappropriation of this tRNA by the elongation apparatus.</text>
</comment>
<comment type="catalytic activity">
    <reaction evidence="1">
        <text>L-methionyl-tRNA(fMet) + (6R)-10-formyltetrahydrofolate = N-formyl-L-methionyl-tRNA(fMet) + (6S)-5,6,7,8-tetrahydrofolate + H(+)</text>
        <dbReference type="Rhea" id="RHEA:24380"/>
        <dbReference type="Rhea" id="RHEA-COMP:9952"/>
        <dbReference type="Rhea" id="RHEA-COMP:9953"/>
        <dbReference type="ChEBI" id="CHEBI:15378"/>
        <dbReference type="ChEBI" id="CHEBI:57453"/>
        <dbReference type="ChEBI" id="CHEBI:78530"/>
        <dbReference type="ChEBI" id="CHEBI:78844"/>
        <dbReference type="ChEBI" id="CHEBI:195366"/>
        <dbReference type="EC" id="2.1.2.9"/>
    </reaction>
</comment>
<comment type="similarity">
    <text evidence="1">Belongs to the Fmt family.</text>
</comment>